<keyword id="KW-0007">Acetylation</keyword>
<keyword id="KW-0597">Phosphoprotein</keyword>
<keyword id="KW-1185">Reference proteome</keyword>
<keyword id="KW-0677">Repeat</keyword>
<keyword id="KW-0807">Transducer</keyword>
<keyword id="KW-0853">WD repeat</keyword>
<name>GBB4_RAT</name>
<reference key="1">
    <citation type="submission" date="2004-02" db="EMBL/GenBank/DDBJ databases">
        <title>Cloning and characterization of the rat G-protein beta 4 subunit.</title>
        <authorList>
            <person name="Puhl H.L. III"/>
            <person name="Ikeda S.R."/>
        </authorList>
    </citation>
    <scope>NUCLEOTIDE SEQUENCE [MRNA]</scope>
    <source>
        <strain>Wistar</strain>
        <tissue>Brain</tissue>
    </source>
</reference>
<reference key="2">
    <citation type="journal article" date="2004" name="Genome Res.">
        <title>The status, quality, and expansion of the NIH full-length cDNA project: the Mammalian Gene Collection (MGC).</title>
        <authorList>
            <consortium name="The MGC Project Team"/>
        </authorList>
    </citation>
    <scope>NUCLEOTIDE SEQUENCE [LARGE SCALE MRNA]</scope>
    <source>
        <tissue>Placenta</tissue>
    </source>
</reference>
<reference key="3">
    <citation type="journal article" date="1998" name="Neuroscience">
        <title>Distribution of heterotrimeric G-protein beta and gamma subunits in the rat brain.</title>
        <authorList>
            <person name="Betty M."/>
            <person name="Harnish S.W."/>
            <person name="Rhodes K.J."/>
            <person name="Cockett M.I."/>
        </authorList>
    </citation>
    <scope>NUCLEOTIDE SEQUENCE [MRNA] OF 321-340</scope>
    <scope>TISSUE SPECIFICITY</scope>
    <source>
        <strain>Sprague-Dawley</strain>
        <tissue>Brain</tissue>
    </source>
</reference>
<proteinExistence type="evidence at transcript level"/>
<evidence type="ECO:0000250" key="1">
    <source>
        <dbReference type="UniProtKB" id="P62871"/>
    </source>
</evidence>
<evidence type="ECO:0000250" key="2">
    <source>
        <dbReference type="UniProtKB" id="P62873"/>
    </source>
</evidence>
<evidence type="ECO:0000250" key="3">
    <source>
        <dbReference type="UniProtKB" id="Q9HAV0"/>
    </source>
</evidence>
<evidence type="ECO:0000269" key="4">
    <source>
    </source>
</evidence>
<evidence type="ECO:0000305" key="5"/>
<dbReference type="EMBL" id="AY552804">
    <property type="protein sequence ID" value="AAS59142.1"/>
    <property type="molecule type" value="mRNA"/>
</dbReference>
<dbReference type="EMBL" id="BC097370">
    <property type="protein sequence ID" value="AAH97370.1"/>
    <property type="molecule type" value="mRNA"/>
</dbReference>
<dbReference type="EMBL" id="AF022085">
    <property type="protein sequence ID" value="AAB82552.1"/>
    <property type="molecule type" value="mRNA"/>
</dbReference>
<dbReference type="RefSeq" id="NP_001013932.1">
    <property type="nucleotide sequence ID" value="NM_001013910.2"/>
</dbReference>
<dbReference type="RefSeq" id="XP_038957910.1">
    <property type="nucleotide sequence ID" value="XM_039101982.2"/>
</dbReference>
<dbReference type="RefSeq" id="XP_063137632.1">
    <property type="nucleotide sequence ID" value="XM_063281562.1"/>
</dbReference>
<dbReference type="SMR" id="O35353"/>
<dbReference type="BioGRID" id="254841">
    <property type="interactions" value="2"/>
</dbReference>
<dbReference type="FunCoup" id="O35353">
    <property type="interactions" value="662"/>
</dbReference>
<dbReference type="IntAct" id="O35353">
    <property type="interactions" value="3"/>
</dbReference>
<dbReference type="MINT" id="O35353"/>
<dbReference type="STRING" id="10116.ENSRNOP00000074669"/>
<dbReference type="iPTMnet" id="O35353"/>
<dbReference type="PhosphoSitePlus" id="O35353"/>
<dbReference type="SwissPalm" id="O35353"/>
<dbReference type="jPOST" id="O35353"/>
<dbReference type="PaxDb" id="10116-ENSRNOP00000014871"/>
<dbReference type="Ensembl" id="ENSRNOT00000087803.2">
    <property type="protein sequence ID" value="ENSRNOP00000074669.2"/>
    <property type="gene ID" value="ENSRNOG00000011070.8"/>
</dbReference>
<dbReference type="GeneID" id="294962"/>
<dbReference type="KEGG" id="rno:294962"/>
<dbReference type="UCSC" id="RGD:1359321">
    <property type="organism name" value="rat"/>
</dbReference>
<dbReference type="AGR" id="RGD:1359321"/>
<dbReference type="CTD" id="59345"/>
<dbReference type="RGD" id="1359321">
    <property type="gene designation" value="Gnb4"/>
</dbReference>
<dbReference type="eggNOG" id="KOG0286">
    <property type="taxonomic scope" value="Eukaryota"/>
</dbReference>
<dbReference type="GeneTree" id="ENSGT01000000214413"/>
<dbReference type="InParanoid" id="O35353"/>
<dbReference type="OMA" id="GDTNCAL"/>
<dbReference type="OrthoDB" id="10255630at2759"/>
<dbReference type="Reactome" id="R-RNO-1296041">
    <property type="pathway name" value="Activation of G protein gated Potassium channels"/>
</dbReference>
<dbReference type="Reactome" id="R-RNO-202040">
    <property type="pathway name" value="G-protein activation"/>
</dbReference>
<dbReference type="Reactome" id="R-RNO-381676">
    <property type="pathway name" value="Glucagon-like Peptide-1 (GLP1) regulates insulin secretion"/>
</dbReference>
<dbReference type="Reactome" id="R-RNO-392170">
    <property type="pathway name" value="ADP signalling through P2Y purinoceptor 12"/>
</dbReference>
<dbReference type="Reactome" id="R-RNO-392451">
    <property type="pathway name" value="G beta:gamma signalling through PI3Kgamma"/>
</dbReference>
<dbReference type="Reactome" id="R-RNO-400042">
    <property type="pathway name" value="Adrenaline,noradrenaline inhibits insulin secretion"/>
</dbReference>
<dbReference type="Reactome" id="R-RNO-4086398">
    <property type="pathway name" value="Ca2+ pathway"/>
</dbReference>
<dbReference type="Reactome" id="R-RNO-416476">
    <property type="pathway name" value="G alpha (q) signalling events"/>
</dbReference>
<dbReference type="Reactome" id="R-RNO-418594">
    <property type="pathway name" value="G alpha (i) signalling events"/>
</dbReference>
<dbReference type="Reactome" id="R-RNO-418597">
    <property type="pathway name" value="G alpha (z) signalling events"/>
</dbReference>
<dbReference type="Reactome" id="R-RNO-420092">
    <property type="pathway name" value="Glucagon-type ligand receptors"/>
</dbReference>
<dbReference type="Reactome" id="R-RNO-428930">
    <property type="pathway name" value="Thromboxane signalling through TP receptor"/>
</dbReference>
<dbReference type="Reactome" id="R-RNO-432040">
    <property type="pathway name" value="Vasopressin regulates renal water homeostasis via Aquaporins"/>
</dbReference>
<dbReference type="Reactome" id="R-RNO-456926">
    <property type="pathway name" value="Thrombin signalling through proteinase activated receptors (PARs)"/>
</dbReference>
<dbReference type="Reactome" id="R-RNO-6814122">
    <property type="pathway name" value="Cooperation of PDCL (PhLP1) and TRiC/CCT in G-protein beta folding"/>
</dbReference>
<dbReference type="Reactome" id="R-RNO-8964616">
    <property type="pathway name" value="G beta:gamma signalling through CDC42"/>
</dbReference>
<dbReference type="Reactome" id="R-RNO-9856530">
    <property type="pathway name" value="High laminar flow shear stress activates signaling by PIEZO1 and PECAM1:CDH5:KDR in endothelial cells"/>
</dbReference>
<dbReference type="Reactome" id="R-RNO-997272">
    <property type="pathway name" value="Inhibition of voltage gated Ca2+ channels via Gbeta/gamma subunits"/>
</dbReference>
<dbReference type="PRO" id="PR:O35353"/>
<dbReference type="Proteomes" id="UP000002494">
    <property type="component" value="Chromosome 2"/>
</dbReference>
<dbReference type="GO" id="GO:0044297">
    <property type="term" value="C:cell body"/>
    <property type="evidence" value="ECO:0000314"/>
    <property type="project" value="RGD"/>
</dbReference>
<dbReference type="GO" id="GO:0005737">
    <property type="term" value="C:cytoplasm"/>
    <property type="evidence" value="ECO:0000318"/>
    <property type="project" value="GO_Central"/>
</dbReference>
<dbReference type="GO" id="GO:0005834">
    <property type="term" value="C:heterotrimeric G-protein complex"/>
    <property type="evidence" value="ECO:0000266"/>
    <property type="project" value="RGD"/>
</dbReference>
<dbReference type="GO" id="GO:0045202">
    <property type="term" value="C:synapse"/>
    <property type="evidence" value="ECO:0000266"/>
    <property type="project" value="RGD"/>
</dbReference>
<dbReference type="GO" id="GO:0044877">
    <property type="term" value="F:protein-containing complex binding"/>
    <property type="evidence" value="ECO:0000266"/>
    <property type="project" value="RGD"/>
</dbReference>
<dbReference type="GO" id="GO:0030159">
    <property type="term" value="F:signaling receptor complex adaptor activity"/>
    <property type="evidence" value="ECO:0000318"/>
    <property type="project" value="GO_Central"/>
</dbReference>
<dbReference type="GO" id="GO:0007186">
    <property type="term" value="P:G protein-coupled receptor signaling pathway"/>
    <property type="evidence" value="ECO:0000318"/>
    <property type="project" value="GO_Central"/>
</dbReference>
<dbReference type="CDD" id="cd00200">
    <property type="entry name" value="WD40"/>
    <property type="match status" value="1"/>
</dbReference>
<dbReference type="FunFam" id="2.130.10.10:FF:000007">
    <property type="entry name" value="Guanine nucleotide-binding protein G(I)/G(S)/G(T) subunit beta-1"/>
    <property type="match status" value="1"/>
</dbReference>
<dbReference type="Gene3D" id="2.130.10.10">
    <property type="entry name" value="YVTN repeat-like/Quinoprotein amine dehydrogenase"/>
    <property type="match status" value="1"/>
</dbReference>
<dbReference type="InterPro" id="IPR020472">
    <property type="entry name" value="G-protein_beta_WD-40_rep"/>
</dbReference>
<dbReference type="InterPro" id="IPR001632">
    <property type="entry name" value="Gprotein_B"/>
</dbReference>
<dbReference type="InterPro" id="IPR016346">
    <property type="entry name" value="Guanine_nucleotide-bd_bsu"/>
</dbReference>
<dbReference type="InterPro" id="IPR015943">
    <property type="entry name" value="WD40/YVTN_repeat-like_dom_sf"/>
</dbReference>
<dbReference type="InterPro" id="IPR019775">
    <property type="entry name" value="WD40_repeat_CS"/>
</dbReference>
<dbReference type="InterPro" id="IPR036322">
    <property type="entry name" value="WD40_repeat_dom_sf"/>
</dbReference>
<dbReference type="InterPro" id="IPR001680">
    <property type="entry name" value="WD40_rpt"/>
</dbReference>
<dbReference type="PANTHER" id="PTHR19850">
    <property type="entry name" value="GUANINE NUCLEOTIDE-BINDING PROTEIN BETA G PROTEIN BETA"/>
    <property type="match status" value="1"/>
</dbReference>
<dbReference type="Pfam" id="PF25391">
    <property type="entry name" value="WD40_Gbeta"/>
    <property type="match status" value="1"/>
</dbReference>
<dbReference type="PIRSF" id="PIRSF002394">
    <property type="entry name" value="GN-bd_beta"/>
    <property type="match status" value="1"/>
</dbReference>
<dbReference type="PRINTS" id="PR00319">
    <property type="entry name" value="GPROTEINB"/>
</dbReference>
<dbReference type="PRINTS" id="PR00320">
    <property type="entry name" value="GPROTEINBRPT"/>
</dbReference>
<dbReference type="SMART" id="SM00320">
    <property type="entry name" value="WD40"/>
    <property type="match status" value="7"/>
</dbReference>
<dbReference type="SUPFAM" id="SSF50978">
    <property type="entry name" value="WD40 repeat-like"/>
    <property type="match status" value="1"/>
</dbReference>
<dbReference type="PROSITE" id="PS00678">
    <property type="entry name" value="WD_REPEATS_1"/>
    <property type="match status" value="3"/>
</dbReference>
<dbReference type="PROSITE" id="PS50082">
    <property type="entry name" value="WD_REPEATS_2"/>
    <property type="match status" value="6"/>
</dbReference>
<dbReference type="PROSITE" id="PS50294">
    <property type="entry name" value="WD_REPEATS_REGION"/>
    <property type="match status" value="1"/>
</dbReference>
<comment type="function">
    <text>Guanine nucleotide-binding proteins (G proteins) are involved as a modulator or transducer in various transmembrane signaling systems. The beta and gamma chains are required for the GTPase activity, for replacement of GDP by GTP, and for G protein-effector interaction.</text>
</comment>
<comment type="subunit">
    <text>G proteins are composed of 3 units, alpha, beta and gamma.</text>
</comment>
<comment type="tissue specificity">
    <text evidence="4">Widely expressed in the brain. Highest levels found in the hippocampus and layers v and vi of the neocortex.</text>
</comment>
<comment type="similarity">
    <text evidence="5">Belongs to the WD repeat G protein beta family.</text>
</comment>
<feature type="initiator methionine" description="Removed" evidence="3">
    <location>
        <position position="1"/>
    </location>
</feature>
<feature type="chain" id="PRO_0000127704" description="Guanine nucleotide-binding protein subunit beta-4">
    <location>
        <begin position="2"/>
        <end position="340"/>
    </location>
</feature>
<feature type="repeat" description="WD 1">
    <location>
        <begin position="53"/>
        <end position="92"/>
    </location>
</feature>
<feature type="repeat" description="WD 2">
    <location>
        <begin position="95"/>
        <end position="134"/>
    </location>
</feature>
<feature type="repeat" description="WD 3">
    <location>
        <begin position="141"/>
        <end position="179"/>
    </location>
</feature>
<feature type="repeat" description="WD 4">
    <location>
        <begin position="182"/>
        <end position="221"/>
    </location>
</feature>
<feature type="repeat" description="WD 5">
    <location>
        <begin position="224"/>
        <end position="263"/>
    </location>
</feature>
<feature type="repeat" description="WD 6">
    <location>
        <begin position="268"/>
        <end position="307"/>
    </location>
</feature>
<feature type="repeat" description="WD 7">
    <location>
        <begin position="310"/>
        <end position="339"/>
    </location>
</feature>
<feature type="modified residue" description="N-acetylserine" evidence="3">
    <location>
        <position position="2"/>
    </location>
</feature>
<feature type="modified residue" description="Phosphoserine" evidence="2">
    <location>
        <position position="2"/>
    </location>
</feature>
<feature type="modified residue" description="Phosphohistidine" evidence="1">
    <location>
        <position position="266"/>
    </location>
</feature>
<organism>
    <name type="scientific">Rattus norvegicus</name>
    <name type="common">Rat</name>
    <dbReference type="NCBI Taxonomy" id="10116"/>
    <lineage>
        <taxon>Eukaryota</taxon>
        <taxon>Metazoa</taxon>
        <taxon>Chordata</taxon>
        <taxon>Craniata</taxon>
        <taxon>Vertebrata</taxon>
        <taxon>Euteleostomi</taxon>
        <taxon>Mammalia</taxon>
        <taxon>Eutheria</taxon>
        <taxon>Euarchontoglires</taxon>
        <taxon>Glires</taxon>
        <taxon>Rodentia</taxon>
        <taxon>Myomorpha</taxon>
        <taxon>Muroidea</taxon>
        <taxon>Muridae</taxon>
        <taxon>Murinae</taxon>
        <taxon>Rattus</taxon>
    </lineage>
</organism>
<gene>
    <name type="primary">Gnb4</name>
</gene>
<sequence length="340" mass="37363">MSELEQLRQEAEQLRNQIQDARKACNDATLVQITSNMDSVGRIQMRTRRTLRGHLAKIYAMHWGYDSRLLVSASQDGKLIIWDSYTTNKMHAIPLRSSWVMTCAYAPSGNYVACGGLDNICSIYNLKTREGNVRVSRELPGHTGYLSCCRFLDDGQIITSSGDTTCALWDIETGQQTTTFTGHSGDVMSLSLSPDLKTFVSGACDASSKLWDIRDGMCRQSFTGHISDINAVSFFPSGYAFATGSDDATCRLFDLRADQELLLYSHDNIICGITSVAFSKSGRLLLAGYDDFNCSVWDALKGGRAGVLAGHDNRVSCLGVTDDGMAVATGSWDSFLRIWN</sequence>
<protein>
    <recommendedName>
        <fullName>Guanine nucleotide-binding protein subunit beta-4</fullName>
    </recommendedName>
    <alternativeName>
        <fullName>Transducin beta chain 4</fullName>
    </alternativeName>
</protein>
<accession>O35353</accession>
<accession>Q4V8I8</accession>
<accession>Q6Q8B2</accession>